<name>NANT2_ECOL6</name>
<feature type="chain" id="PRO_0000050314" description="Sialic acid transporter NanT 2">
    <location>
        <begin position="1"/>
        <end position="502"/>
    </location>
</feature>
<feature type="transmembrane region" description="Helical" evidence="1">
    <location>
        <begin position="34"/>
        <end position="54"/>
    </location>
</feature>
<feature type="transmembrane region" description="Helical" evidence="1">
    <location>
        <begin position="71"/>
        <end position="91"/>
    </location>
</feature>
<feature type="transmembrane region" description="Helical" evidence="1">
    <location>
        <begin position="105"/>
        <end position="125"/>
    </location>
</feature>
<feature type="transmembrane region" description="Helical" evidence="1">
    <location>
        <begin position="129"/>
        <end position="149"/>
    </location>
</feature>
<feature type="transmembrane region" description="Helical" evidence="1">
    <location>
        <begin position="158"/>
        <end position="178"/>
    </location>
</feature>
<feature type="transmembrane region" description="Helical" evidence="1">
    <location>
        <begin position="179"/>
        <end position="199"/>
    </location>
</feature>
<feature type="transmembrane region" description="Helical" evidence="1">
    <location>
        <begin position="237"/>
        <end position="257"/>
    </location>
</feature>
<feature type="transmembrane region" description="Helical" evidence="1">
    <location>
        <begin position="259"/>
        <end position="279"/>
    </location>
</feature>
<feature type="transmembrane region" description="Helical" evidence="1">
    <location>
        <begin position="291"/>
        <end position="311"/>
    </location>
</feature>
<feature type="transmembrane region" description="Helical" evidence="1">
    <location>
        <begin position="326"/>
        <end position="346"/>
    </location>
</feature>
<feature type="transmembrane region" description="Helical" evidence="1">
    <location>
        <begin position="367"/>
        <end position="387"/>
    </location>
</feature>
<feature type="transmembrane region" description="Helical" evidence="1">
    <location>
        <begin position="391"/>
        <end position="411"/>
    </location>
</feature>
<feature type="transmembrane region" description="Helical" evidence="1">
    <location>
        <begin position="419"/>
        <end position="439"/>
    </location>
</feature>
<feature type="transmembrane region" description="Helical" evidence="1">
    <location>
        <begin position="445"/>
        <end position="465"/>
    </location>
</feature>
<keyword id="KW-0997">Cell inner membrane</keyword>
<keyword id="KW-1003">Cell membrane</keyword>
<keyword id="KW-0472">Membrane</keyword>
<keyword id="KW-1185">Reference proteome</keyword>
<keyword id="KW-0762">Sugar transport</keyword>
<keyword id="KW-0812">Transmembrane</keyword>
<keyword id="KW-1133">Transmembrane helix</keyword>
<keyword id="KW-0813">Transport</keyword>
<protein>
    <recommendedName>
        <fullName evidence="1">Sialic acid transporter NanT 2</fullName>
    </recommendedName>
    <alternativeName>
        <fullName evidence="1">Sialic acid permease 2</fullName>
    </alternativeName>
    <alternativeName>
        <fullName evidence="1">Sialic acid/H(+) symporter 2</fullName>
    </alternativeName>
</protein>
<reference key="1">
    <citation type="journal article" date="2002" name="Proc. Natl. Acad. Sci. U.S.A.">
        <title>Extensive mosaic structure revealed by the complete genome sequence of uropathogenic Escherichia coli.</title>
        <authorList>
            <person name="Welch R.A."/>
            <person name="Burland V."/>
            <person name="Plunkett G. III"/>
            <person name="Redford P."/>
            <person name="Roesch P."/>
            <person name="Rasko D."/>
            <person name="Buckles E.L."/>
            <person name="Liou S.-R."/>
            <person name="Boutin A."/>
            <person name="Hackett J."/>
            <person name="Stroud D."/>
            <person name="Mayhew G.F."/>
            <person name="Rose D.J."/>
            <person name="Zhou S."/>
            <person name="Schwartz D.C."/>
            <person name="Perna N.T."/>
            <person name="Mobley H.L.T."/>
            <person name="Donnenberg M.S."/>
            <person name="Blattner F.R."/>
        </authorList>
    </citation>
    <scope>NUCLEOTIDE SEQUENCE [LARGE SCALE GENOMIC DNA]</scope>
    <source>
        <strain>CFT073 / ATCC 700928 / UPEC</strain>
    </source>
</reference>
<organism>
    <name type="scientific">Escherichia coli O6:H1 (strain CFT073 / ATCC 700928 / UPEC)</name>
    <dbReference type="NCBI Taxonomy" id="199310"/>
    <lineage>
        <taxon>Bacteria</taxon>
        <taxon>Pseudomonadati</taxon>
        <taxon>Pseudomonadota</taxon>
        <taxon>Gammaproteobacteria</taxon>
        <taxon>Enterobacterales</taxon>
        <taxon>Enterobacteriaceae</taxon>
        <taxon>Escherichia</taxon>
    </lineage>
</organism>
<dbReference type="EMBL" id="AE014075">
    <property type="protein sequence ID" value="AAN82085.1"/>
    <property type="molecule type" value="Genomic_DNA"/>
</dbReference>
<dbReference type="STRING" id="199310.c3637"/>
<dbReference type="KEGG" id="ecc:c3637"/>
<dbReference type="eggNOG" id="COG2814">
    <property type="taxonomic scope" value="Bacteria"/>
</dbReference>
<dbReference type="HOGENOM" id="CLU_001265_46_8_6"/>
<dbReference type="BioCyc" id="ECOL199310:C3637-MONOMER"/>
<dbReference type="Proteomes" id="UP000001410">
    <property type="component" value="Chromosome"/>
</dbReference>
<dbReference type="GO" id="GO:0005886">
    <property type="term" value="C:plasma membrane"/>
    <property type="evidence" value="ECO:0007669"/>
    <property type="project" value="UniProtKB-SubCell"/>
</dbReference>
<dbReference type="GO" id="GO:0046943">
    <property type="term" value="F:carboxylic acid transmembrane transporter activity"/>
    <property type="evidence" value="ECO:0007669"/>
    <property type="project" value="TreeGrafter"/>
</dbReference>
<dbReference type="GO" id="GO:0015538">
    <property type="term" value="F:sialic acid:proton symporter activity"/>
    <property type="evidence" value="ECO:0007669"/>
    <property type="project" value="UniProtKB-UniRule"/>
</dbReference>
<dbReference type="CDD" id="cd17316">
    <property type="entry name" value="MFS_SV2_like"/>
    <property type="match status" value="1"/>
</dbReference>
<dbReference type="Gene3D" id="1.20.1250.20">
    <property type="entry name" value="MFS general substrate transporter like domains"/>
    <property type="match status" value="2"/>
</dbReference>
<dbReference type="HAMAP" id="MF_01238">
    <property type="entry name" value="MFS_NanT"/>
    <property type="match status" value="1"/>
</dbReference>
<dbReference type="InterPro" id="IPR011701">
    <property type="entry name" value="MFS"/>
</dbReference>
<dbReference type="InterPro" id="IPR020846">
    <property type="entry name" value="MFS_dom"/>
</dbReference>
<dbReference type="InterPro" id="IPR036259">
    <property type="entry name" value="MFS_trans_sf"/>
</dbReference>
<dbReference type="InterPro" id="IPR004742">
    <property type="entry name" value="SA_transporter"/>
</dbReference>
<dbReference type="InterPro" id="IPR005829">
    <property type="entry name" value="Sugar_transporter_CS"/>
</dbReference>
<dbReference type="NCBIfam" id="NF003024">
    <property type="entry name" value="PRK03893.1"/>
    <property type="match status" value="1"/>
</dbReference>
<dbReference type="PANTHER" id="PTHR23508">
    <property type="entry name" value="CARBOXYLIC ACID TRANSPORTER PROTEIN HOMOLOG"/>
    <property type="match status" value="1"/>
</dbReference>
<dbReference type="PANTHER" id="PTHR23508:SF3">
    <property type="entry name" value="SIALIC ACID TRANSPORTER NANT"/>
    <property type="match status" value="1"/>
</dbReference>
<dbReference type="Pfam" id="PF07690">
    <property type="entry name" value="MFS_1"/>
    <property type="match status" value="1"/>
</dbReference>
<dbReference type="SUPFAM" id="SSF103473">
    <property type="entry name" value="MFS general substrate transporter"/>
    <property type="match status" value="1"/>
</dbReference>
<dbReference type="PROSITE" id="PS50850">
    <property type="entry name" value="MFS"/>
    <property type="match status" value="1"/>
</dbReference>
<dbReference type="PROSITE" id="PS00216">
    <property type="entry name" value="SUGAR_TRANSPORT_1"/>
    <property type="match status" value="1"/>
</dbReference>
<gene>
    <name evidence="1" type="primary">nanT2</name>
    <name type="ordered locus">c3637</name>
</gene>
<sequence>MYYKSAIIVRFNMDSCIQKKQVWYKHLSPRQWKIFGAAWTGYLLDGFDFVLISLVLTEVQHEFGLTTIEAASLISAAFISRWFGGLAIGALSDKMGRRMAMVLSIVLFSLGTLACGLAPGYAVMFIARIVIGLGMAGEYGSSVTYVIESWPVHLRNKASGFLISGFSIGGGLAAQVYSIVVPLWGWRSLFFVGMLPILFAFYLRKNLPESDDWQKRQQENKPVRTMVDILYREKNKYINILLSCIAFACLYVCFSGVTANAALITVMALCCAAVFISFIYQGMGKRWPTGIMLMLVVMFCFLYGWPLQAFLPTWLKVDMQYSPETVALIFMLAGFGSAAGSCIGGFMGDWLGTRKAYVISLLIGQLVIIPVFLVDRDYVWLLGLLIFTQQVFGQGIGALVPKIISGYFNVEQRAAGLGFIYNVGSLGGACAPILGAVVASHTSLGTAMCSLAFILTFVVLVLIGFDMPSRVQRWIHPEAALEYDTVDGKPFYGARKKNVAEE</sequence>
<proteinExistence type="inferred from homology"/>
<evidence type="ECO:0000255" key="1">
    <source>
        <dbReference type="HAMAP-Rule" id="MF_01238"/>
    </source>
</evidence>
<comment type="function">
    <text evidence="1">Catalyzes the proton-dependent transport of sialic acid.</text>
</comment>
<comment type="catalytic activity">
    <reaction evidence="1">
        <text>N-acetylneuraminate(in) + H(+)(in) = N-acetylneuraminate(out) + H(+)(out)</text>
        <dbReference type="Rhea" id="RHEA:28987"/>
        <dbReference type="ChEBI" id="CHEBI:15378"/>
        <dbReference type="ChEBI" id="CHEBI:35418"/>
    </reaction>
</comment>
<comment type="subcellular location">
    <subcellularLocation>
        <location evidence="1">Cell inner membrane</location>
        <topology evidence="1">Multi-pass membrane protein</topology>
    </subcellularLocation>
</comment>
<comment type="similarity">
    <text evidence="1">Belongs to the major facilitator superfamily. Sialate:H(+) symporter (SHS) (TC 2.A.1.12) family.</text>
</comment>
<accession>Q8FDU9</accession>